<keyword id="KW-0997">Cell inner membrane</keyword>
<keyword id="KW-1003">Cell membrane</keyword>
<keyword id="KW-0472">Membrane</keyword>
<keyword id="KW-1185">Reference proteome</keyword>
<keyword id="KW-0812">Transmembrane</keyword>
<keyword id="KW-1133">Transmembrane helix</keyword>
<comment type="function">
    <text evidence="1">Plays a role in cell envelope biogenesis, maintenance of cell envelope integrity and membrane homeostasis.</text>
</comment>
<comment type="subcellular location">
    <subcellularLocation>
        <location evidence="1">Cell inner membrane</location>
        <topology evidence="1">Multi-pass membrane protein</topology>
    </subcellularLocation>
</comment>
<comment type="similarity">
    <text evidence="1">Belongs to the YciB family.</text>
</comment>
<sequence>MDKTQPHPLFKLATELGPLIVFFFVNAKFNLFAATGAFMVAIIAALIASYVVTRHIPLMALVTAVVVIVFGTLTLVLHDETFIKVKPTIIYGLFAAVLGGGLVFNRSFIAIMFDQMFNLTPAGWRILTFRWALFFAGMAVLNEIIWRTQSTDFWVGFKAFGVLPLTMIFAIAQMPLIKRYHQDPASLEASDAAEGDVSKG</sequence>
<name>YCIB_BRASO</name>
<feature type="chain" id="PRO_1000020985" description="Inner membrane-spanning protein YciB">
    <location>
        <begin position="1"/>
        <end position="200"/>
    </location>
</feature>
<feature type="transmembrane region" description="Helical" evidence="1">
    <location>
        <begin position="7"/>
        <end position="27"/>
    </location>
</feature>
<feature type="transmembrane region" description="Helical" evidence="1">
    <location>
        <begin position="32"/>
        <end position="52"/>
    </location>
</feature>
<feature type="transmembrane region" description="Helical" evidence="1">
    <location>
        <begin position="56"/>
        <end position="76"/>
    </location>
</feature>
<feature type="transmembrane region" description="Helical" evidence="1">
    <location>
        <begin position="93"/>
        <end position="113"/>
    </location>
</feature>
<feature type="transmembrane region" description="Helical" evidence="1">
    <location>
        <begin position="126"/>
        <end position="146"/>
    </location>
</feature>
<feature type="transmembrane region" description="Helical" evidence="1">
    <location>
        <begin position="153"/>
        <end position="173"/>
    </location>
</feature>
<dbReference type="EMBL" id="CU234118">
    <property type="protein sequence ID" value="CAL74335.1"/>
    <property type="molecule type" value="Genomic_DNA"/>
</dbReference>
<dbReference type="RefSeq" id="WP_011923616.1">
    <property type="nucleotide sequence ID" value="NC_009445.1"/>
</dbReference>
<dbReference type="STRING" id="114615.BRADO0387"/>
<dbReference type="KEGG" id="bra:BRADO0387"/>
<dbReference type="eggNOG" id="COG2917">
    <property type="taxonomic scope" value="Bacteria"/>
</dbReference>
<dbReference type="HOGENOM" id="CLU_089554_1_1_5"/>
<dbReference type="OrthoDB" id="9788219at2"/>
<dbReference type="Proteomes" id="UP000001994">
    <property type="component" value="Chromosome"/>
</dbReference>
<dbReference type="GO" id="GO:0005886">
    <property type="term" value="C:plasma membrane"/>
    <property type="evidence" value="ECO:0007669"/>
    <property type="project" value="UniProtKB-SubCell"/>
</dbReference>
<dbReference type="HAMAP" id="MF_00189">
    <property type="entry name" value="YciB"/>
    <property type="match status" value="1"/>
</dbReference>
<dbReference type="InterPro" id="IPR006008">
    <property type="entry name" value="YciB"/>
</dbReference>
<dbReference type="NCBIfam" id="TIGR00997">
    <property type="entry name" value="ispZ"/>
    <property type="match status" value="1"/>
</dbReference>
<dbReference type="NCBIfam" id="NF001323">
    <property type="entry name" value="PRK00259.1-1"/>
    <property type="match status" value="1"/>
</dbReference>
<dbReference type="PANTHER" id="PTHR36917:SF1">
    <property type="entry name" value="INNER MEMBRANE-SPANNING PROTEIN YCIB"/>
    <property type="match status" value="1"/>
</dbReference>
<dbReference type="PANTHER" id="PTHR36917">
    <property type="entry name" value="INTRACELLULAR SEPTATION PROTEIN A-RELATED"/>
    <property type="match status" value="1"/>
</dbReference>
<dbReference type="Pfam" id="PF04279">
    <property type="entry name" value="IspA"/>
    <property type="match status" value="1"/>
</dbReference>
<proteinExistence type="inferred from homology"/>
<accession>A4YKA9</accession>
<reference key="1">
    <citation type="journal article" date="2007" name="Science">
        <title>Legumes symbioses: absence of nod genes in photosynthetic bradyrhizobia.</title>
        <authorList>
            <person name="Giraud E."/>
            <person name="Moulin L."/>
            <person name="Vallenet D."/>
            <person name="Barbe V."/>
            <person name="Cytryn E."/>
            <person name="Avarre J.-C."/>
            <person name="Jaubert M."/>
            <person name="Simon D."/>
            <person name="Cartieaux F."/>
            <person name="Prin Y."/>
            <person name="Bena G."/>
            <person name="Hannibal L."/>
            <person name="Fardoux J."/>
            <person name="Kojadinovic M."/>
            <person name="Vuillet L."/>
            <person name="Lajus A."/>
            <person name="Cruveiller S."/>
            <person name="Rouy Z."/>
            <person name="Mangenot S."/>
            <person name="Segurens B."/>
            <person name="Dossat C."/>
            <person name="Franck W.L."/>
            <person name="Chang W.-S."/>
            <person name="Saunders E."/>
            <person name="Bruce D."/>
            <person name="Richardson P."/>
            <person name="Normand P."/>
            <person name="Dreyfus B."/>
            <person name="Pignol D."/>
            <person name="Stacey G."/>
            <person name="Emerich D."/>
            <person name="Vermeglio A."/>
            <person name="Medigue C."/>
            <person name="Sadowsky M."/>
        </authorList>
    </citation>
    <scope>NUCLEOTIDE SEQUENCE [LARGE SCALE GENOMIC DNA]</scope>
    <source>
        <strain>ORS 278</strain>
    </source>
</reference>
<evidence type="ECO:0000255" key="1">
    <source>
        <dbReference type="HAMAP-Rule" id="MF_00189"/>
    </source>
</evidence>
<protein>
    <recommendedName>
        <fullName evidence="1">Inner membrane-spanning protein YciB</fullName>
    </recommendedName>
</protein>
<organism>
    <name type="scientific">Bradyrhizobium sp. (strain ORS 278)</name>
    <dbReference type="NCBI Taxonomy" id="114615"/>
    <lineage>
        <taxon>Bacteria</taxon>
        <taxon>Pseudomonadati</taxon>
        <taxon>Pseudomonadota</taxon>
        <taxon>Alphaproteobacteria</taxon>
        <taxon>Hyphomicrobiales</taxon>
        <taxon>Nitrobacteraceae</taxon>
        <taxon>Bradyrhizobium</taxon>
    </lineage>
</organism>
<gene>
    <name evidence="1" type="primary">yciB</name>
    <name type="ordered locus">BRADO0387</name>
</gene>